<dbReference type="EC" id="2.1.2.3" evidence="1"/>
<dbReference type="EC" id="3.5.4.10" evidence="1"/>
<dbReference type="EMBL" id="CU633749">
    <property type="protein sequence ID" value="CAP63125.1"/>
    <property type="molecule type" value="Genomic_DNA"/>
</dbReference>
<dbReference type="RefSeq" id="WP_012351786.1">
    <property type="nucleotide sequence ID" value="NC_010528.1"/>
</dbReference>
<dbReference type="SMR" id="B2AH76"/>
<dbReference type="GeneID" id="29761652"/>
<dbReference type="KEGG" id="cti:RALTA_A0457"/>
<dbReference type="eggNOG" id="COG0138">
    <property type="taxonomic scope" value="Bacteria"/>
</dbReference>
<dbReference type="HOGENOM" id="CLU_016316_5_2_4"/>
<dbReference type="BioCyc" id="CTAI977880:RALTA_RS02235-MONOMER"/>
<dbReference type="UniPathway" id="UPA00074">
    <property type="reaction ID" value="UER00133"/>
</dbReference>
<dbReference type="UniPathway" id="UPA00074">
    <property type="reaction ID" value="UER00135"/>
</dbReference>
<dbReference type="Proteomes" id="UP000001692">
    <property type="component" value="Chromosome 1"/>
</dbReference>
<dbReference type="GO" id="GO:0005829">
    <property type="term" value="C:cytosol"/>
    <property type="evidence" value="ECO:0007669"/>
    <property type="project" value="TreeGrafter"/>
</dbReference>
<dbReference type="GO" id="GO:0003937">
    <property type="term" value="F:IMP cyclohydrolase activity"/>
    <property type="evidence" value="ECO:0007669"/>
    <property type="project" value="UniProtKB-UniRule"/>
</dbReference>
<dbReference type="GO" id="GO:0004643">
    <property type="term" value="F:phosphoribosylaminoimidazolecarboxamide formyltransferase activity"/>
    <property type="evidence" value="ECO:0007669"/>
    <property type="project" value="UniProtKB-UniRule"/>
</dbReference>
<dbReference type="GO" id="GO:0006189">
    <property type="term" value="P:'de novo' IMP biosynthetic process"/>
    <property type="evidence" value="ECO:0007669"/>
    <property type="project" value="UniProtKB-UniRule"/>
</dbReference>
<dbReference type="CDD" id="cd01421">
    <property type="entry name" value="IMPCH"/>
    <property type="match status" value="1"/>
</dbReference>
<dbReference type="FunFam" id="3.40.140.20:FF:000001">
    <property type="entry name" value="Bifunctional purine biosynthesis protein PurH"/>
    <property type="match status" value="1"/>
</dbReference>
<dbReference type="FunFam" id="3.40.140.20:FF:000002">
    <property type="entry name" value="Bifunctional purine biosynthesis protein PurH"/>
    <property type="match status" value="1"/>
</dbReference>
<dbReference type="FunFam" id="3.40.50.1380:FF:000001">
    <property type="entry name" value="Bifunctional purine biosynthesis protein PurH"/>
    <property type="match status" value="1"/>
</dbReference>
<dbReference type="Gene3D" id="3.40.140.20">
    <property type="match status" value="2"/>
</dbReference>
<dbReference type="Gene3D" id="3.40.50.1380">
    <property type="entry name" value="Methylglyoxal synthase-like domain"/>
    <property type="match status" value="1"/>
</dbReference>
<dbReference type="HAMAP" id="MF_00139">
    <property type="entry name" value="PurH"/>
    <property type="match status" value="1"/>
</dbReference>
<dbReference type="InterPro" id="IPR024051">
    <property type="entry name" value="AICAR_Tfase_dup_dom_sf"/>
</dbReference>
<dbReference type="InterPro" id="IPR016193">
    <property type="entry name" value="Cytidine_deaminase-like"/>
</dbReference>
<dbReference type="InterPro" id="IPR011607">
    <property type="entry name" value="MGS-like_dom"/>
</dbReference>
<dbReference type="InterPro" id="IPR036914">
    <property type="entry name" value="MGS-like_dom_sf"/>
</dbReference>
<dbReference type="InterPro" id="IPR002695">
    <property type="entry name" value="PurH-like"/>
</dbReference>
<dbReference type="NCBIfam" id="NF002049">
    <property type="entry name" value="PRK00881.1"/>
    <property type="match status" value="1"/>
</dbReference>
<dbReference type="NCBIfam" id="TIGR00355">
    <property type="entry name" value="purH"/>
    <property type="match status" value="1"/>
</dbReference>
<dbReference type="PANTHER" id="PTHR11692:SF0">
    <property type="entry name" value="BIFUNCTIONAL PURINE BIOSYNTHESIS PROTEIN ATIC"/>
    <property type="match status" value="1"/>
</dbReference>
<dbReference type="PANTHER" id="PTHR11692">
    <property type="entry name" value="BIFUNCTIONAL PURINE BIOSYNTHESIS PROTEIN PURH"/>
    <property type="match status" value="1"/>
</dbReference>
<dbReference type="Pfam" id="PF01808">
    <property type="entry name" value="AICARFT_IMPCHas"/>
    <property type="match status" value="1"/>
</dbReference>
<dbReference type="Pfam" id="PF02142">
    <property type="entry name" value="MGS"/>
    <property type="match status" value="1"/>
</dbReference>
<dbReference type="PIRSF" id="PIRSF000414">
    <property type="entry name" value="AICARFT_IMPCHas"/>
    <property type="match status" value="1"/>
</dbReference>
<dbReference type="SMART" id="SM00798">
    <property type="entry name" value="AICARFT_IMPCHas"/>
    <property type="match status" value="1"/>
</dbReference>
<dbReference type="SMART" id="SM00851">
    <property type="entry name" value="MGS"/>
    <property type="match status" value="1"/>
</dbReference>
<dbReference type="SUPFAM" id="SSF53927">
    <property type="entry name" value="Cytidine deaminase-like"/>
    <property type="match status" value="1"/>
</dbReference>
<dbReference type="SUPFAM" id="SSF52335">
    <property type="entry name" value="Methylglyoxal synthase-like"/>
    <property type="match status" value="1"/>
</dbReference>
<dbReference type="PROSITE" id="PS51855">
    <property type="entry name" value="MGS"/>
    <property type="match status" value="1"/>
</dbReference>
<feature type="chain" id="PRO_1000096059" description="Bifunctional purine biosynthesis protein PurH">
    <location>
        <begin position="1"/>
        <end position="524"/>
    </location>
</feature>
<feature type="domain" description="MGS-like" evidence="2">
    <location>
        <begin position="1"/>
        <end position="145"/>
    </location>
</feature>
<protein>
    <recommendedName>
        <fullName evidence="1">Bifunctional purine biosynthesis protein PurH</fullName>
    </recommendedName>
    <domain>
        <recommendedName>
            <fullName evidence="1">Phosphoribosylaminoimidazolecarboxamide formyltransferase</fullName>
            <ecNumber evidence="1">2.1.2.3</ecNumber>
        </recommendedName>
        <alternativeName>
            <fullName evidence="1">AICAR transformylase</fullName>
        </alternativeName>
    </domain>
    <domain>
        <recommendedName>
            <fullName evidence="1">IMP cyclohydrolase</fullName>
            <ecNumber evidence="1">3.5.4.10</ecNumber>
        </recommendedName>
        <alternativeName>
            <fullName evidence="1">ATIC</fullName>
        </alternativeName>
        <alternativeName>
            <fullName evidence="1">IMP synthase</fullName>
        </alternativeName>
        <alternativeName>
            <fullName evidence="1">Inosinicase</fullName>
        </alternativeName>
    </domain>
</protein>
<accession>B2AH76</accession>
<gene>
    <name evidence="1" type="primary">purH</name>
    <name type="ordered locus">RALTA_A0457</name>
</gene>
<proteinExistence type="inferred from homology"/>
<evidence type="ECO:0000255" key="1">
    <source>
        <dbReference type="HAMAP-Rule" id="MF_00139"/>
    </source>
</evidence>
<evidence type="ECO:0000255" key="2">
    <source>
        <dbReference type="PROSITE-ProRule" id="PRU01202"/>
    </source>
</evidence>
<sequence length="524" mass="55790">MIKQALLSVSDKTGIVEFARELNALGVTLLSTGGTAKLLADSGLPVTEVADYTGFPEMLDGRVKTLHPKVHGGILARRDLPEHMAALAEHDIPTIDLLVVNLYPFQQTVAKDDCTLPDAIENIDIGGPTMLRSAAKNHRDVTVIVDPADYAVVLGEMRANGNSVGYDTNFRLATKVFAHTAQYDGAITNYLTSLGADKSHQARSAYPQTLNLAFDKVQEMRYGENPHQSAAFYRDLKAVDGALANYVQLQGKELSYNNIADADAAWECVKSFDAAAAAACVIIKHANPCGVALGANALEAYDKAFKTDSTSAFGGIIAFNVELDEAAAQAVAKQFVEVLIAPSFSAAARAVFAAKQNVRLLEIPLGKGINQYDFKRVGGGLLVQSPDAKNVQPSELRVVTRRHPTPKEMDDLMFAWRVAKFVKSNAIVFCGGGMTLGVGAGQMSRVDSARIASIKAQNAGLTLAGSAVASDAFFPFRDGLDVVVDAGATCVIQPGGSVRDDEVIAAADEHGIAMVLTGTRHFRH</sequence>
<organism>
    <name type="scientific">Cupriavidus taiwanensis (strain DSM 17343 / BCRC 17206 / CCUG 44338 / CIP 107171 / LMG 19424 / R1)</name>
    <name type="common">Ralstonia taiwanensis (strain LMG 19424)</name>
    <dbReference type="NCBI Taxonomy" id="977880"/>
    <lineage>
        <taxon>Bacteria</taxon>
        <taxon>Pseudomonadati</taxon>
        <taxon>Pseudomonadota</taxon>
        <taxon>Betaproteobacteria</taxon>
        <taxon>Burkholderiales</taxon>
        <taxon>Burkholderiaceae</taxon>
        <taxon>Cupriavidus</taxon>
    </lineage>
</organism>
<comment type="catalytic activity">
    <reaction evidence="1">
        <text>(6R)-10-formyltetrahydrofolate + 5-amino-1-(5-phospho-beta-D-ribosyl)imidazole-4-carboxamide = 5-formamido-1-(5-phospho-D-ribosyl)imidazole-4-carboxamide + (6S)-5,6,7,8-tetrahydrofolate</text>
        <dbReference type="Rhea" id="RHEA:22192"/>
        <dbReference type="ChEBI" id="CHEBI:57453"/>
        <dbReference type="ChEBI" id="CHEBI:58467"/>
        <dbReference type="ChEBI" id="CHEBI:58475"/>
        <dbReference type="ChEBI" id="CHEBI:195366"/>
        <dbReference type="EC" id="2.1.2.3"/>
    </reaction>
</comment>
<comment type="catalytic activity">
    <reaction evidence="1">
        <text>IMP + H2O = 5-formamido-1-(5-phospho-D-ribosyl)imidazole-4-carboxamide</text>
        <dbReference type="Rhea" id="RHEA:18445"/>
        <dbReference type="ChEBI" id="CHEBI:15377"/>
        <dbReference type="ChEBI" id="CHEBI:58053"/>
        <dbReference type="ChEBI" id="CHEBI:58467"/>
        <dbReference type="EC" id="3.5.4.10"/>
    </reaction>
</comment>
<comment type="pathway">
    <text evidence="1">Purine metabolism; IMP biosynthesis via de novo pathway; 5-formamido-1-(5-phospho-D-ribosyl)imidazole-4-carboxamide from 5-amino-1-(5-phospho-D-ribosyl)imidazole-4-carboxamide (10-formyl THF route): step 1/1.</text>
</comment>
<comment type="pathway">
    <text evidence="1">Purine metabolism; IMP biosynthesis via de novo pathway; IMP from 5-formamido-1-(5-phospho-D-ribosyl)imidazole-4-carboxamide: step 1/1.</text>
</comment>
<comment type="domain">
    <text evidence="1">The IMP cyclohydrolase activity resides in the N-terminal region.</text>
</comment>
<comment type="similarity">
    <text evidence="1">Belongs to the PurH family.</text>
</comment>
<reference key="1">
    <citation type="journal article" date="2008" name="Genome Res.">
        <title>Genome sequence of the beta-rhizobium Cupriavidus taiwanensis and comparative genomics of rhizobia.</title>
        <authorList>
            <person name="Amadou C."/>
            <person name="Pascal G."/>
            <person name="Mangenot S."/>
            <person name="Glew M."/>
            <person name="Bontemps C."/>
            <person name="Capela D."/>
            <person name="Carrere S."/>
            <person name="Cruveiller S."/>
            <person name="Dossat C."/>
            <person name="Lajus A."/>
            <person name="Marchetti M."/>
            <person name="Poinsot V."/>
            <person name="Rouy Z."/>
            <person name="Servin B."/>
            <person name="Saad M."/>
            <person name="Schenowitz C."/>
            <person name="Barbe V."/>
            <person name="Batut J."/>
            <person name="Medigue C."/>
            <person name="Masson-Boivin C."/>
        </authorList>
    </citation>
    <scope>NUCLEOTIDE SEQUENCE [LARGE SCALE GENOMIC DNA]</scope>
    <source>
        <strain>DSM 17343 / BCRC 17206 / CCUG 44338 / CIP 107171 / LMG 19424 / R1</strain>
    </source>
</reference>
<keyword id="KW-0378">Hydrolase</keyword>
<keyword id="KW-0511">Multifunctional enzyme</keyword>
<keyword id="KW-0658">Purine biosynthesis</keyword>
<keyword id="KW-0808">Transferase</keyword>
<name>PUR9_CUPTR</name>